<dbReference type="EC" id="3.1.11.6" evidence="1"/>
<dbReference type="EMBL" id="CP000886">
    <property type="protein sequence ID" value="ABX65866.1"/>
    <property type="molecule type" value="Genomic_DNA"/>
</dbReference>
<dbReference type="RefSeq" id="WP_000953161.1">
    <property type="nucleotide sequence ID" value="NC_010102.1"/>
</dbReference>
<dbReference type="SMR" id="A9N216"/>
<dbReference type="KEGG" id="spq:SPAB_00433"/>
<dbReference type="PATRIC" id="fig|1016998.12.peg.407"/>
<dbReference type="HOGENOM" id="CLU_023625_3_1_6"/>
<dbReference type="BioCyc" id="SENT1016998:SPAB_RS01755-MONOMER"/>
<dbReference type="Proteomes" id="UP000008556">
    <property type="component" value="Chromosome"/>
</dbReference>
<dbReference type="GO" id="GO:0005737">
    <property type="term" value="C:cytoplasm"/>
    <property type="evidence" value="ECO:0007669"/>
    <property type="project" value="UniProtKB-SubCell"/>
</dbReference>
<dbReference type="GO" id="GO:0009318">
    <property type="term" value="C:exodeoxyribonuclease VII complex"/>
    <property type="evidence" value="ECO:0007669"/>
    <property type="project" value="InterPro"/>
</dbReference>
<dbReference type="GO" id="GO:0008855">
    <property type="term" value="F:exodeoxyribonuclease VII activity"/>
    <property type="evidence" value="ECO:0007669"/>
    <property type="project" value="UniProtKB-UniRule"/>
</dbReference>
<dbReference type="GO" id="GO:0003676">
    <property type="term" value="F:nucleic acid binding"/>
    <property type="evidence" value="ECO:0007669"/>
    <property type="project" value="InterPro"/>
</dbReference>
<dbReference type="GO" id="GO:0006308">
    <property type="term" value="P:DNA catabolic process"/>
    <property type="evidence" value="ECO:0007669"/>
    <property type="project" value="UniProtKB-UniRule"/>
</dbReference>
<dbReference type="CDD" id="cd04489">
    <property type="entry name" value="ExoVII_LU_OBF"/>
    <property type="match status" value="1"/>
</dbReference>
<dbReference type="HAMAP" id="MF_00378">
    <property type="entry name" value="Exonuc_7_L"/>
    <property type="match status" value="1"/>
</dbReference>
<dbReference type="InterPro" id="IPR003753">
    <property type="entry name" value="Exonuc_VII_L"/>
</dbReference>
<dbReference type="InterPro" id="IPR020579">
    <property type="entry name" value="Exonuc_VII_lsu_C"/>
</dbReference>
<dbReference type="InterPro" id="IPR025824">
    <property type="entry name" value="OB-fold_nuc-bd_dom"/>
</dbReference>
<dbReference type="NCBIfam" id="TIGR00237">
    <property type="entry name" value="xseA"/>
    <property type="match status" value="1"/>
</dbReference>
<dbReference type="PANTHER" id="PTHR30008">
    <property type="entry name" value="EXODEOXYRIBONUCLEASE 7 LARGE SUBUNIT"/>
    <property type="match status" value="1"/>
</dbReference>
<dbReference type="PANTHER" id="PTHR30008:SF0">
    <property type="entry name" value="EXODEOXYRIBONUCLEASE 7 LARGE SUBUNIT"/>
    <property type="match status" value="1"/>
</dbReference>
<dbReference type="Pfam" id="PF02601">
    <property type="entry name" value="Exonuc_VII_L"/>
    <property type="match status" value="1"/>
</dbReference>
<dbReference type="Pfam" id="PF13742">
    <property type="entry name" value="tRNA_anti_2"/>
    <property type="match status" value="1"/>
</dbReference>
<protein>
    <recommendedName>
        <fullName evidence="1">Exodeoxyribonuclease 7 large subunit</fullName>
        <ecNumber evidence="1">3.1.11.6</ecNumber>
    </recommendedName>
    <alternativeName>
        <fullName evidence="1">Exodeoxyribonuclease VII large subunit</fullName>
        <shortName evidence="1">Exonuclease VII large subunit</shortName>
    </alternativeName>
</protein>
<evidence type="ECO:0000255" key="1">
    <source>
        <dbReference type="HAMAP-Rule" id="MF_00378"/>
    </source>
</evidence>
<proteinExistence type="inferred from homology"/>
<keyword id="KW-0963">Cytoplasm</keyword>
<keyword id="KW-0269">Exonuclease</keyword>
<keyword id="KW-0378">Hydrolase</keyword>
<keyword id="KW-0540">Nuclease</keyword>
<gene>
    <name evidence="1" type="primary">xseA</name>
    <name type="ordered locus">SPAB_00433</name>
</gene>
<comment type="function">
    <text evidence="1">Bidirectionally degrades single-stranded DNA into large acid-insoluble oligonucleotides, which are then degraded further into small acid-soluble oligonucleotides.</text>
</comment>
<comment type="catalytic activity">
    <reaction evidence="1">
        <text>Exonucleolytic cleavage in either 5'- to 3'- or 3'- to 5'-direction to yield nucleoside 5'-phosphates.</text>
        <dbReference type="EC" id="3.1.11.6"/>
    </reaction>
</comment>
<comment type="subunit">
    <text evidence="1">Heterooligomer composed of large and small subunits.</text>
</comment>
<comment type="subcellular location">
    <subcellularLocation>
        <location evidence="1">Cytoplasm</location>
    </subcellularLocation>
</comment>
<comment type="similarity">
    <text evidence="1">Belongs to the XseA family.</text>
</comment>
<accession>A9N216</accession>
<name>EX7L_SALPB</name>
<reference key="1">
    <citation type="submission" date="2007-11" db="EMBL/GenBank/DDBJ databases">
        <authorList>
            <consortium name="The Salmonella enterica serovar Paratyphi B Genome Sequencing Project"/>
            <person name="McClelland M."/>
            <person name="Sanderson E.K."/>
            <person name="Porwollik S."/>
            <person name="Spieth J."/>
            <person name="Clifton W.S."/>
            <person name="Fulton R."/>
            <person name="Cordes M."/>
            <person name="Wollam A."/>
            <person name="Shah N."/>
            <person name="Pepin K."/>
            <person name="Bhonagiri V."/>
            <person name="Nash W."/>
            <person name="Johnson M."/>
            <person name="Thiruvilangam P."/>
            <person name="Wilson R."/>
        </authorList>
    </citation>
    <scope>NUCLEOTIDE SEQUENCE [LARGE SCALE GENOMIC DNA]</scope>
    <source>
        <strain>ATCC BAA-1250 / SPB7</strain>
    </source>
</reference>
<sequence>MLSSQTSSIFTVSRLNQTVRLLLEQEMGQVWISGEISNFTQPASGHWYFTLKDDTAQVRCAMFRNSNRRVTFRPQHGQQVLVRANITLYEPRGDYQIIAESMQPAGEGLLQQKYEQLKAKLQAEGLFDQQHKQPLPSPAHCVGVITSKTGAALHDILHVLKRRDPSLPVIIYPTAVQGDDAPGQIVRAIELANARGECDVLIIGRGGGSLEDLWSFNDERVARAIFANRIPVVSAVGHETDVTIADFVADLRAPTPSAAAEIVSRNQQELLRQIQSAQQRLGMAMDYYLANRSRRFTQIFHRLQQQHPQLRLARQQTALERLRQRMGFALEARIKQATQRQQRVSQRLSQQNPQPRIHRAQSRIQQLEYRLTENIRSRLSEQRERFGNAVTHLEAVSPLATLARGYTVSTTTNGKVLKKIKQVKAGDIMTTRLEDGWLESEVKSVTPGT</sequence>
<feature type="chain" id="PRO_1000079990" description="Exodeoxyribonuclease 7 large subunit">
    <location>
        <begin position="1"/>
        <end position="449"/>
    </location>
</feature>
<organism>
    <name type="scientific">Salmonella paratyphi B (strain ATCC BAA-1250 / SPB7)</name>
    <dbReference type="NCBI Taxonomy" id="1016998"/>
    <lineage>
        <taxon>Bacteria</taxon>
        <taxon>Pseudomonadati</taxon>
        <taxon>Pseudomonadota</taxon>
        <taxon>Gammaproteobacteria</taxon>
        <taxon>Enterobacterales</taxon>
        <taxon>Enterobacteriaceae</taxon>
        <taxon>Salmonella</taxon>
    </lineage>
</organism>